<proteinExistence type="evidence at protein level"/>
<evidence type="ECO:0000269" key="1">
    <source>
    </source>
</evidence>
<evidence type="ECO:0000269" key="2">
    <source>
    </source>
</evidence>
<evidence type="ECO:0000269" key="3">
    <source>
    </source>
</evidence>
<evidence type="ECO:0000269" key="4">
    <source>
    </source>
</evidence>
<evidence type="ECO:0000269" key="5">
    <source>
    </source>
</evidence>
<evidence type="ECO:0000269" key="6">
    <source>
    </source>
</evidence>
<evidence type="ECO:0000305" key="7"/>
<evidence type="ECO:0007829" key="8">
    <source>
        <dbReference type="PDB" id="6VGC"/>
    </source>
</evidence>
<evidence type="ECO:0007829" key="9">
    <source>
        <dbReference type="PDB" id="6VGI"/>
    </source>
</evidence>
<sequence>MDQETVGNVVLLAIVTLISVVQNGFFAHKVEHESRTQNGRSFQRTGTLAFERVYTANQNCVDAYPTFLAVLWSAGLLCSQVPAAFAGLMYLFVRQKYFVGYLGERTQSTPGYIFGKRIILFLFLMSVAGIFNYYLIFFFGSDFENYIKTISTTISPLLLIP</sequence>
<keyword id="KW-0002">3D-structure</keyword>
<keyword id="KW-0256">Endoplasmic reticulum</keyword>
<keyword id="KW-0434">Leukotriene biosynthesis</keyword>
<keyword id="KW-0472">Membrane</keyword>
<keyword id="KW-0539">Nucleus</keyword>
<keyword id="KW-1267">Proteomics identification</keyword>
<keyword id="KW-1185">Reference proteome</keyword>
<keyword id="KW-0812">Transmembrane</keyword>
<keyword id="KW-1133">Transmembrane helix</keyword>
<name>AL5AP_HUMAN</name>
<reference key="1">
    <citation type="journal article" date="1990" name="Nature">
        <title>Requirement of a 5-lipoxygenase-activating protein for leukotriene synthesis.</title>
        <authorList>
            <person name="Dixon R.A.F."/>
            <person name="Diehl R.E."/>
            <person name="Opas E."/>
            <person name="Rands E."/>
            <person name="Vickers P.J."/>
            <person name="Evans J.F."/>
            <person name="Gillard J.W."/>
            <person name="Miller D.K."/>
        </authorList>
    </citation>
    <scope>NUCLEOTIDE SEQUENCE [MRNA]</scope>
    <scope>FUNCTION</scope>
</reference>
<reference key="2">
    <citation type="journal article" date="1991" name="J. Biol. Chem.">
        <title>Gene characterization and promoter analysis of the human 5-lipoxygenase-activating protein (FLAP).</title>
        <authorList>
            <person name="Kennedy B.P."/>
            <person name="Diehl R.E."/>
            <person name="Boie Y."/>
            <person name="Adam M."/>
            <person name="Dixon R.A.F."/>
        </authorList>
    </citation>
    <scope>NUCLEOTIDE SEQUENCE [GENOMIC DNA]</scope>
</reference>
<reference key="3">
    <citation type="submission" date="2004-05" db="EMBL/GenBank/DDBJ databases">
        <authorList>
            <consortium name="SeattleSNPs variation discovery resource"/>
        </authorList>
    </citation>
    <scope>NUCLEOTIDE SEQUENCE [GENOMIC DNA]</scope>
</reference>
<reference key="4">
    <citation type="journal article" date="2004" name="Nature">
        <title>The DNA sequence and analysis of human chromosome 13.</title>
        <authorList>
            <person name="Dunham A."/>
            <person name="Matthews L.H."/>
            <person name="Burton J."/>
            <person name="Ashurst J.L."/>
            <person name="Howe K.L."/>
            <person name="Ashcroft K.J."/>
            <person name="Beare D.M."/>
            <person name="Burford D.C."/>
            <person name="Hunt S.E."/>
            <person name="Griffiths-Jones S."/>
            <person name="Jones M.C."/>
            <person name="Keenan S.J."/>
            <person name="Oliver K."/>
            <person name="Scott C.E."/>
            <person name="Ainscough R."/>
            <person name="Almeida J.P."/>
            <person name="Ambrose K.D."/>
            <person name="Andrews D.T."/>
            <person name="Ashwell R.I.S."/>
            <person name="Babbage A.K."/>
            <person name="Bagguley C.L."/>
            <person name="Bailey J."/>
            <person name="Bannerjee R."/>
            <person name="Barlow K.F."/>
            <person name="Bates K."/>
            <person name="Beasley H."/>
            <person name="Bird C.P."/>
            <person name="Bray-Allen S."/>
            <person name="Brown A.J."/>
            <person name="Brown J.Y."/>
            <person name="Burrill W."/>
            <person name="Carder C."/>
            <person name="Carter N.P."/>
            <person name="Chapman J.C."/>
            <person name="Clamp M.E."/>
            <person name="Clark S.Y."/>
            <person name="Clarke G."/>
            <person name="Clee C.M."/>
            <person name="Clegg S.C."/>
            <person name="Cobley V."/>
            <person name="Collins J.E."/>
            <person name="Corby N."/>
            <person name="Coville G.J."/>
            <person name="Deloukas P."/>
            <person name="Dhami P."/>
            <person name="Dunham I."/>
            <person name="Dunn M."/>
            <person name="Earthrowl M.E."/>
            <person name="Ellington A.G."/>
            <person name="Faulkner L."/>
            <person name="Frankish A.G."/>
            <person name="Frankland J."/>
            <person name="French L."/>
            <person name="Garner P."/>
            <person name="Garnett J."/>
            <person name="Gilbert J.G.R."/>
            <person name="Gilson C.J."/>
            <person name="Ghori J."/>
            <person name="Grafham D.V."/>
            <person name="Gribble S.M."/>
            <person name="Griffiths C."/>
            <person name="Hall R.E."/>
            <person name="Hammond S."/>
            <person name="Harley J.L."/>
            <person name="Hart E.A."/>
            <person name="Heath P.D."/>
            <person name="Howden P.J."/>
            <person name="Huckle E.J."/>
            <person name="Hunt P.J."/>
            <person name="Hunt A.R."/>
            <person name="Johnson C."/>
            <person name="Johnson D."/>
            <person name="Kay M."/>
            <person name="Kimberley A.M."/>
            <person name="King A."/>
            <person name="Laird G.K."/>
            <person name="Langford C.J."/>
            <person name="Lawlor S."/>
            <person name="Leongamornlert D.A."/>
            <person name="Lloyd D.M."/>
            <person name="Lloyd C."/>
            <person name="Loveland J.E."/>
            <person name="Lovell J."/>
            <person name="Martin S."/>
            <person name="Mashreghi-Mohammadi M."/>
            <person name="McLaren S.J."/>
            <person name="McMurray A."/>
            <person name="Milne S."/>
            <person name="Moore M.J.F."/>
            <person name="Nickerson T."/>
            <person name="Palmer S.A."/>
            <person name="Pearce A.V."/>
            <person name="Peck A.I."/>
            <person name="Pelan S."/>
            <person name="Phillimore B."/>
            <person name="Porter K.M."/>
            <person name="Rice C.M."/>
            <person name="Searle S."/>
            <person name="Sehra H.K."/>
            <person name="Shownkeen R."/>
            <person name="Skuce C.D."/>
            <person name="Smith M."/>
            <person name="Steward C.A."/>
            <person name="Sycamore N."/>
            <person name="Tester J."/>
            <person name="Thomas D.W."/>
            <person name="Tracey A."/>
            <person name="Tromans A."/>
            <person name="Tubby B."/>
            <person name="Wall M."/>
            <person name="Wallis J.M."/>
            <person name="West A.P."/>
            <person name="Whitehead S.L."/>
            <person name="Willey D.L."/>
            <person name="Wilming L."/>
            <person name="Wray P.W."/>
            <person name="Wright M.W."/>
            <person name="Young L."/>
            <person name="Coulson A."/>
            <person name="Durbin R.M."/>
            <person name="Hubbard T."/>
            <person name="Sulston J.E."/>
            <person name="Beck S."/>
            <person name="Bentley D.R."/>
            <person name="Rogers J."/>
            <person name="Ross M.T."/>
        </authorList>
    </citation>
    <scope>NUCLEOTIDE SEQUENCE [LARGE SCALE GENOMIC DNA]</scope>
</reference>
<reference key="5">
    <citation type="journal article" date="2004" name="Genome Res.">
        <title>The status, quality, and expansion of the NIH full-length cDNA project: the Mammalian Gene Collection (MGC).</title>
        <authorList>
            <consortium name="The MGC Project Team"/>
        </authorList>
    </citation>
    <scope>NUCLEOTIDE SEQUENCE [LARGE SCALE MRNA]</scope>
    <source>
        <tissue>Lymph</tissue>
    </source>
</reference>
<reference key="6">
    <citation type="journal article" date="1993" name="FEBS Lett.">
        <title>5-lipoxygenase-activating protein is an arachidonate binding protein.</title>
        <authorList>
            <person name="Mancini J.A."/>
            <person name="Abramovitz M."/>
            <person name="Cox M.E."/>
            <person name="Wong E."/>
            <person name="Charleson S."/>
            <person name="Perrier H."/>
            <person name="Wang Z."/>
            <person name="Prasit P."/>
            <person name="Vickers P.J."/>
        </authorList>
    </citation>
    <scope>FUNCTION</scope>
    <scope>SUBCELLULAR LOCATION</scope>
</reference>
<reference key="7">
    <citation type="journal article" date="1993" name="J. Exp. Med.">
        <title>5-lipoxygenase and 5-lipoxygenase-activating protein are localized in the nuclear envelope of activated human leukocytes.</title>
        <authorList>
            <person name="Woods J.W."/>
            <person name="Evans J.F."/>
            <person name="Ethier D."/>
            <person name="Scott S."/>
            <person name="Vickers P.J."/>
            <person name="Hearn L."/>
            <person name="Heibein J.A."/>
            <person name="Charleson S."/>
            <person name="Singer I.I."/>
        </authorList>
    </citation>
    <scope>SUBCELLULAR LOCATION</scope>
</reference>
<reference key="8">
    <citation type="journal article" date="2004" name="Nat. Genet.">
        <title>The gene encoding 5-lipoxygenase activating protein confers risk of myocardial infarction and stroke.</title>
        <authorList>
            <person name="Helgadottir A."/>
            <person name="Manolescu A."/>
            <person name="Thorleifsson G."/>
            <person name="Gretarsdottir S."/>
            <person name="Jonsdottir H."/>
            <person name="Thorsteinsdottir U."/>
            <person name="Samani N.J."/>
            <person name="Gudmundsson G."/>
            <person name="Grant S.F.A."/>
            <person name="Thorgeirsson G."/>
            <person name="Sveinbjornsdottir S."/>
            <person name="Valdimarsson E.M."/>
            <person name="Matthiasson S.E."/>
            <person name="Johannsson H."/>
            <person name="Gudmundsdottir O."/>
            <person name="Gurney M.E."/>
            <person name="Sainz J."/>
            <person name="Thorhallsdottir M."/>
            <person name="Andresdottir M."/>
            <person name="Frigge M.L."/>
            <person name="Topol E.J."/>
            <person name="Kong A."/>
            <person name="Gudnason V."/>
            <person name="Hakonarson H."/>
            <person name="Gulcher J.R."/>
            <person name="Stefansson K."/>
        </authorList>
    </citation>
    <scope>SUSCEPTIBILITY TO MYOCARDIAL INFARCTION</scope>
    <scope>SUSCEPTIBILITY TO ISCHSTR</scope>
</reference>
<reference key="9">
    <citation type="journal article" date="2007" name="Genet. Med.">
        <title>No association of polymorphisms in the gene encoding 5-lipoxygenase-activating protein and myocardial infarction in a large central European population.</title>
        <authorList>
            <person name="Koch W."/>
            <person name="Hoppmann P."/>
            <person name="Mueller J.C."/>
            <person name="Schomig A."/>
            <person name="Kastrati A."/>
        </authorList>
    </citation>
    <scope>LACK OF ASSOCIATION WITH MYOCARDIAL INFARCTION</scope>
</reference>
<reference key="10">
    <citation type="journal article" date="2009" name="Biochem. Biophys. Res. Commun.">
        <title>Distinct parts of leukotriene C(4) synthase interact with 5-lipoxygenase and 5-lipoxygenase activating protein.</title>
        <authorList>
            <person name="Strid T."/>
            <person name="Svartz J."/>
            <person name="Franck N."/>
            <person name="Hallin E."/>
            <person name="Ingelsson B."/>
            <person name="Soederstroem M."/>
            <person name="Hammarstroem S."/>
        </authorList>
    </citation>
    <scope>INTERACTION WITH LTC4S AND ALOX5</scope>
    <scope>SUBCELLULAR LOCATION</scope>
</reference>
<reference key="11">
    <citation type="journal article" date="2011" name="BMC Syst. Biol.">
        <title>Initial characterization of the human central proteome.</title>
        <authorList>
            <person name="Burkard T.R."/>
            <person name="Planyavsky M."/>
            <person name="Kaupe I."/>
            <person name="Breitwieser F.P."/>
            <person name="Buerckstuemmer T."/>
            <person name="Bennett K.L."/>
            <person name="Superti-Furga G."/>
            <person name="Colinge J."/>
        </authorList>
    </citation>
    <scope>IDENTIFICATION BY MASS SPECTROMETRY [LARGE SCALE ANALYSIS]</scope>
</reference>
<reference key="12">
    <citation type="journal article" date="2015" name="Proteomics">
        <title>N-terminome analysis of the human mitochondrial proteome.</title>
        <authorList>
            <person name="Vaca Jacome A.S."/>
            <person name="Rabilloud T."/>
            <person name="Schaeffer-Reiss C."/>
            <person name="Rompais M."/>
            <person name="Ayoub D."/>
            <person name="Lane L."/>
            <person name="Bairoch A."/>
            <person name="Van Dorsselaer A."/>
            <person name="Carapito C."/>
        </authorList>
    </citation>
    <scope>IDENTIFICATION BY MASS SPECTROMETRY [LARGE SCALE ANALYSIS]</scope>
</reference>
<reference key="13">
    <citation type="journal article" date="2007" name="Science">
        <title>Crystal structure of inhibitor-bound human 5-lipoxygenase-activating protein.</title>
        <authorList>
            <person name="Ferguson A.D."/>
            <person name="McKeever B.M."/>
            <person name="Xu S."/>
            <person name="Wisniewski D."/>
            <person name="Miller D.K."/>
            <person name="Yamin T.-T."/>
            <person name="Spencer R.H."/>
            <person name="Chu L."/>
            <person name="Ujjainwalla F."/>
            <person name="Cunningham B.R."/>
            <person name="Evans J.F."/>
            <person name="Becker J.W."/>
        </authorList>
    </citation>
    <scope>X-RAY CRYSTALLOGRAPHY (4.0 ANGSTROMS) IN COMPLEXES WITH LEUKOTRIENE BIOSYNTHESIS INHIBITOR MK-591</scope>
    <scope>TOPOLOGY</scope>
    <scope>SUBUNIT</scope>
    <scope>MUTAGENESIS OF VAL-20; ALA-27; VAL-30; ASP-62; THR-66; TYR-112; ILE-113; LYS-116 AND PHE-123</scope>
    <scope>DOMAIN</scope>
</reference>
<organism>
    <name type="scientific">Homo sapiens</name>
    <name type="common">Human</name>
    <dbReference type="NCBI Taxonomy" id="9606"/>
    <lineage>
        <taxon>Eukaryota</taxon>
        <taxon>Metazoa</taxon>
        <taxon>Chordata</taxon>
        <taxon>Craniata</taxon>
        <taxon>Vertebrata</taxon>
        <taxon>Euteleostomi</taxon>
        <taxon>Mammalia</taxon>
        <taxon>Eutheria</taxon>
        <taxon>Euarchontoglires</taxon>
        <taxon>Primates</taxon>
        <taxon>Haplorrhini</taxon>
        <taxon>Catarrhini</taxon>
        <taxon>Hominidae</taxon>
        <taxon>Homo</taxon>
    </lineage>
</organism>
<dbReference type="EMBL" id="X52195">
    <property type="protein sequence ID" value="CAA36441.1"/>
    <property type="molecule type" value="mRNA"/>
</dbReference>
<dbReference type="EMBL" id="M63262">
    <property type="protein sequence ID" value="AAA35845.1"/>
    <property type="molecule type" value="Genomic_DNA"/>
</dbReference>
<dbReference type="EMBL" id="M60470">
    <property type="protein sequence ID" value="AAA35845.1"/>
    <property type="status" value="JOINED"/>
    <property type="molecule type" value="Genomic_DNA"/>
</dbReference>
<dbReference type="EMBL" id="M63259">
    <property type="protein sequence ID" value="AAA35845.1"/>
    <property type="status" value="JOINED"/>
    <property type="molecule type" value="Genomic_DNA"/>
</dbReference>
<dbReference type="EMBL" id="M63260">
    <property type="protein sequence ID" value="AAA35845.1"/>
    <property type="status" value="JOINED"/>
    <property type="molecule type" value="Genomic_DNA"/>
</dbReference>
<dbReference type="EMBL" id="AY619687">
    <property type="protein sequence ID" value="AAT38104.1"/>
    <property type="molecule type" value="Genomic_DNA"/>
</dbReference>
<dbReference type="EMBL" id="AL512642">
    <property type="status" value="NOT_ANNOTATED_CDS"/>
    <property type="molecule type" value="Genomic_DNA"/>
</dbReference>
<dbReference type="EMBL" id="BC018538">
    <property type="protein sequence ID" value="AAH18538.1"/>
    <property type="molecule type" value="mRNA"/>
</dbReference>
<dbReference type="CCDS" id="CCDS9337.1"/>
<dbReference type="PIR" id="A39824">
    <property type="entry name" value="A39824"/>
</dbReference>
<dbReference type="RefSeq" id="NP_001191335.1">
    <property type="nucleotide sequence ID" value="NM_001204406.1"/>
</dbReference>
<dbReference type="RefSeq" id="NP_001620.2">
    <property type="nucleotide sequence ID" value="NM_001629.3"/>
</dbReference>
<dbReference type="PDB" id="2Q7M">
    <property type="method" value="X-ray"/>
    <property type="resolution" value="4.25 A"/>
    <property type="chains" value="A/B/C/D/E/F=1-161"/>
</dbReference>
<dbReference type="PDB" id="2Q7R">
    <property type="method" value="X-ray"/>
    <property type="resolution" value="4.00 A"/>
    <property type="chains" value="A/B/C/D/E/F=1-161"/>
</dbReference>
<dbReference type="PDB" id="6VGC">
    <property type="method" value="X-ray"/>
    <property type="resolution" value="2.37 A"/>
    <property type="chains" value="A/B/C/D/E/F=2-161"/>
</dbReference>
<dbReference type="PDB" id="6VGI">
    <property type="method" value="X-ray"/>
    <property type="resolution" value="2.61 A"/>
    <property type="chains" value="A/B/C/D/E/F=2-161"/>
</dbReference>
<dbReference type="PDBsum" id="2Q7M"/>
<dbReference type="PDBsum" id="2Q7R"/>
<dbReference type="PDBsum" id="6VGC"/>
<dbReference type="PDBsum" id="6VGI"/>
<dbReference type="SMR" id="P20292"/>
<dbReference type="BioGRID" id="106742">
    <property type="interactions" value="14"/>
</dbReference>
<dbReference type="FunCoup" id="P20292">
    <property type="interactions" value="313"/>
</dbReference>
<dbReference type="IntAct" id="P20292">
    <property type="interactions" value="9"/>
</dbReference>
<dbReference type="STRING" id="9606.ENSP00000479870"/>
<dbReference type="BindingDB" id="P20292"/>
<dbReference type="ChEMBL" id="CHEMBL4550"/>
<dbReference type="DrugBank" id="DB05225">
    <property type="generic name" value="AM103"/>
</dbReference>
<dbReference type="DrugBank" id="DB04929">
    <property type="generic name" value="DG031"/>
</dbReference>
<dbReference type="DrugBank" id="DB06346">
    <property type="generic name" value="Fiboflapon"/>
</dbReference>
<dbReference type="DrugBank" id="DB16739">
    <property type="generic name" value="MK-886"/>
</dbReference>
<dbReference type="DrugBank" id="DB16346">
    <property type="generic name" value="Veliflapon"/>
</dbReference>
<dbReference type="DrugCentral" id="P20292"/>
<dbReference type="GlyGen" id="P20292">
    <property type="glycosylation" value="1 site, 1 O-linked glycan (1 site)"/>
</dbReference>
<dbReference type="iPTMnet" id="P20292"/>
<dbReference type="PhosphoSitePlus" id="P20292"/>
<dbReference type="BioMuta" id="ALOX5AP"/>
<dbReference type="DMDM" id="120267"/>
<dbReference type="MassIVE" id="P20292"/>
<dbReference type="PaxDb" id="9606-ENSP00000479870"/>
<dbReference type="PeptideAtlas" id="P20292"/>
<dbReference type="ProteomicsDB" id="53744"/>
<dbReference type="Pumba" id="P20292"/>
<dbReference type="TopDownProteomics" id="P20292"/>
<dbReference type="Antibodypedia" id="22770">
    <property type="antibodies" value="216 antibodies from 31 providers"/>
</dbReference>
<dbReference type="DNASU" id="241"/>
<dbReference type="Ensembl" id="ENST00000380490.5">
    <property type="protein sequence ID" value="ENSP00000369858.3"/>
    <property type="gene ID" value="ENSG00000132965.10"/>
</dbReference>
<dbReference type="GeneID" id="241"/>
<dbReference type="KEGG" id="hsa:241"/>
<dbReference type="MANE-Select" id="ENST00000380490.5">
    <property type="protein sequence ID" value="ENSP00000369858.3"/>
    <property type="RefSeq nucleotide sequence ID" value="NM_001629.4"/>
    <property type="RefSeq protein sequence ID" value="NP_001620.2"/>
</dbReference>
<dbReference type="UCSC" id="uc001utf.3">
    <property type="organism name" value="human"/>
</dbReference>
<dbReference type="AGR" id="HGNC:436"/>
<dbReference type="CTD" id="241"/>
<dbReference type="DisGeNET" id="241"/>
<dbReference type="GeneCards" id="ALOX5AP"/>
<dbReference type="HGNC" id="HGNC:436">
    <property type="gene designation" value="ALOX5AP"/>
</dbReference>
<dbReference type="HPA" id="ENSG00000132965">
    <property type="expression patterns" value="Group enriched (bone marrow, lung, lymphoid tissue)"/>
</dbReference>
<dbReference type="MalaCards" id="ALOX5AP"/>
<dbReference type="MIM" id="601367">
    <property type="type" value="phenotype"/>
</dbReference>
<dbReference type="MIM" id="603700">
    <property type="type" value="gene"/>
</dbReference>
<dbReference type="neXtProt" id="NX_P20292"/>
<dbReference type="OpenTargets" id="ENSG00000132965"/>
<dbReference type="PharmGKB" id="PA47"/>
<dbReference type="VEuPathDB" id="HostDB:ENSG00000132965"/>
<dbReference type="eggNOG" id="ENOG502RZJB">
    <property type="taxonomic scope" value="Eukaryota"/>
</dbReference>
<dbReference type="GeneTree" id="ENSGT00940000158706"/>
<dbReference type="HOGENOM" id="CLU_110291_0_0_1"/>
<dbReference type="InParanoid" id="P20292"/>
<dbReference type="OMA" id="NAPWHTQ"/>
<dbReference type="OrthoDB" id="8659873at2759"/>
<dbReference type="PAN-GO" id="P20292">
    <property type="GO annotations" value="6 GO annotations based on evolutionary models"/>
</dbReference>
<dbReference type="PhylomeDB" id="P20292"/>
<dbReference type="TreeFam" id="TF105328"/>
<dbReference type="BioCyc" id="MetaCyc:ENSG00000132965-MONOMER"/>
<dbReference type="PathwayCommons" id="P20292"/>
<dbReference type="Reactome" id="R-HSA-2142688">
    <property type="pathway name" value="Synthesis of 5-eicosatetraenoic acids"/>
</dbReference>
<dbReference type="Reactome" id="R-HSA-2142691">
    <property type="pathway name" value="Synthesis of Leukotrienes (LT) and Eoxins (EX)"/>
</dbReference>
<dbReference type="Reactome" id="R-HSA-2142700">
    <property type="pathway name" value="Biosynthesis of Lipoxins (LX)"/>
</dbReference>
<dbReference type="SignaLink" id="P20292"/>
<dbReference type="BioGRID-ORCS" id="241">
    <property type="hits" value="13 hits in 1153 CRISPR screens"/>
</dbReference>
<dbReference type="ChiTaRS" id="ALOX5AP">
    <property type="organism name" value="human"/>
</dbReference>
<dbReference type="EvolutionaryTrace" id="P20292"/>
<dbReference type="GeneWiki" id="5-lipoxygenase-activating_protein"/>
<dbReference type="GenomeRNAi" id="241"/>
<dbReference type="Pharos" id="P20292">
    <property type="development level" value="Tchem"/>
</dbReference>
<dbReference type="PRO" id="PR:P20292"/>
<dbReference type="Proteomes" id="UP000005640">
    <property type="component" value="Chromosome 13"/>
</dbReference>
<dbReference type="RNAct" id="P20292">
    <property type="molecule type" value="protein"/>
</dbReference>
<dbReference type="Bgee" id="ENSG00000132965">
    <property type="expression patterns" value="Expressed in blood and 168 other cell types or tissues"/>
</dbReference>
<dbReference type="ExpressionAtlas" id="P20292">
    <property type="expression patterns" value="baseline and differential"/>
</dbReference>
<dbReference type="GO" id="GO:0005783">
    <property type="term" value="C:endoplasmic reticulum"/>
    <property type="evidence" value="ECO:0000314"/>
    <property type="project" value="UniProtKB"/>
</dbReference>
<dbReference type="GO" id="GO:0005789">
    <property type="term" value="C:endoplasmic reticulum membrane"/>
    <property type="evidence" value="ECO:0007669"/>
    <property type="project" value="UniProtKB-SubCell"/>
</dbReference>
<dbReference type="GO" id="GO:0016020">
    <property type="term" value="C:membrane"/>
    <property type="evidence" value="ECO:0007005"/>
    <property type="project" value="UniProtKB"/>
</dbReference>
<dbReference type="GO" id="GO:0005635">
    <property type="term" value="C:nuclear envelope"/>
    <property type="evidence" value="ECO:0000314"/>
    <property type="project" value="UniProtKB"/>
</dbReference>
<dbReference type="GO" id="GO:0031965">
    <property type="term" value="C:nuclear membrane"/>
    <property type="evidence" value="ECO:0000314"/>
    <property type="project" value="UniProtKB"/>
</dbReference>
<dbReference type="GO" id="GO:0050544">
    <property type="term" value="F:arachidonate binding"/>
    <property type="evidence" value="ECO:0000314"/>
    <property type="project" value="UniProtKB"/>
</dbReference>
<dbReference type="GO" id="GO:0008047">
    <property type="term" value="F:enzyme activator activity"/>
    <property type="evidence" value="ECO:0007669"/>
    <property type="project" value="InterPro"/>
</dbReference>
<dbReference type="GO" id="GO:0004602">
    <property type="term" value="F:glutathione peroxidase activity"/>
    <property type="evidence" value="ECO:0000318"/>
    <property type="project" value="GO_Central"/>
</dbReference>
<dbReference type="GO" id="GO:0004364">
    <property type="term" value="F:glutathione transferase activity"/>
    <property type="evidence" value="ECO:0000318"/>
    <property type="project" value="GO_Central"/>
</dbReference>
<dbReference type="GO" id="GO:0004464">
    <property type="term" value="F:leukotriene-C4 synthase activity"/>
    <property type="evidence" value="ECO:0000318"/>
    <property type="project" value="GO_Central"/>
</dbReference>
<dbReference type="GO" id="GO:0071277">
    <property type="term" value="P:cellular response to calcium ion"/>
    <property type="evidence" value="ECO:0000314"/>
    <property type="project" value="UniProtKB"/>
</dbReference>
<dbReference type="GO" id="GO:0019370">
    <property type="term" value="P:leukotriene biosynthetic process"/>
    <property type="evidence" value="ECO:0000314"/>
    <property type="project" value="UniProtKB"/>
</dbReference>
<dbReference type="GO" id="GO:0002540">
    <property type="term" value="P:leukotriene production involved in inflammatory response"/>
    <property type="evidence" value="ECO:0007669"/>
    <property type="project" value="Ensembl"/>
</dbReference>
<dbReference type="GO" id="GO:0070207">
    <property type="term" value="P:protein homotrimerization"/>
    <property type="evidence" value="ECO:0000353"/>
    <property type="project" value="UniProtKB"/>
</dbReference>
<dbReference type="FunFam" id="1.20.120.550:FF:000003">
    <property type="entry name" value="Leukotriene C4 synthase"/>
    <property type="match status" value="1"/>
</dbReference>
<dbReference type="Gene3D" id="1.20.120.550">
    <property type="entry name" value="Membrane associated eicosanoid/glutathione metabolism-like domain"/>
    <property type="match status" value="1"/>
</dbReference>
<dbReference type="InterPro" id="IPR001446">
    <property type="entry name" value="5_LipOase_AP"/>
</dbReference>
<dbReference type="InterPro" id="IPR018295">
    <property type="entry name" value="FLAP/GST2/LTC4S_CS"/>
</dbReference>
<dbReference type="InterPro" id="IPR050997">
    <property type="entry name" value="MAPEG"/>
</dbReference>
<dbReference type="InterPro" id="IPR023352">
    <property type="entry name" value="MAPEG-like_dom_sf"/>
</dbReference>
<dbReference type="InterPro" id="IPR001129">
    <property type="entry name" value="Membr-assoc_MAPEG"/>
</dbReference>
<dbReference type="PANTHER" id="PTHR10250:SF2">
    <property type="entry name" value="ARACHIDONATE 5-LIPOXYGENASE-ACTIVATING PROTEIN"/>
    <property type="match status" value="1"/>
</dbReference>
<dbReference type="PANTHER" id="PTHR10250">
    <property type="entry name" value="MICROSOMAL GLUTATHIONE S-TRANSFERASE"/>
    <property type="match status" value="1"/>
</dbReference>
<dbReference type="Pfam" id="PF01124">
    <property type="entry name" value="MAPEG"/>
    <property type="match status" value="1"/>
</dbReference>
<dbReference type="PRINTS" id="PR00488">
    <property type="entry name" value="5LPOXGNASEAP"/>
</dbReference>
<dbReference type="SUPFAM" id="SSF161084">
    <property type="entry name" value="MAPEG domain-like"/>
    <property type="match status" value="1"/>
</dbReference>
<dbReference type="PROSITE" id="PS01297">
    <property type="entry name" value="FLAP_GST2_LTC4S"/>
    <property type="match status" value="1"/>
</dbReference>
<accession>P20292</accession>
<accession>Q5VV04</accession>
<comment type="function">
    <text evidence="5 6">Required for leukotriene biosynthesis by ALOX5 (5-lipoxygenase). Anchors ALOX5 to the membrane. Binds arachidonic acid, and could play an essential role in the transfer of arachidonic acid to ALOX5. Binds to MK-886, a compound that blocks the biosynthesis of leukotrienes.</text>
</comment>
<comment type="subunit">
    <text evidence="3 4">Homotrimer. Interacts with LTC4S and ALOX5.</text>
</comment>
<comment type="interaction">
    <interactant intactId="EBI-3904621">
        <id>P20292</id>
    </interactant>
    <interactant intactId="EBI-13059134">
        <id>Q13520</id>
        <label>AQP6</label>
    </interactant>
    <organismsDiffer>false</organismsDiffer>
    <experiments>3</experiments>
</comment>
<comment type="interaction">
    <interactant intactId="EBI-3904621">
        <id>P20292</id>
    </interactant>
    <interactant intactId="EBI-2833872">
        <id>O15552</id>
        <label>FFAR2</label>
    </interactant>
    <organismsDiffer>false</organismsDiffer>
    <experiments>3</experiments>
</comment>
<comment type="interaction">
    <interactant intactId="EBI-3904621">
        <id>P20292</id>
    </interactant>
    <interactant intactId="EBI-18076404">
        <id>O15529</id>
        <label>GPR42</label>
    </interactant>
    <organismsDiffer>false</organismsDiffer>
    <experiments>3</experiments>
</comment>
<comment type="interaction">
    <interactant intactId="EBI-3904621">
        <id>P20292</id>
    </interactant>
    <interactant intactId="EBI-3921185">
        <id>Q9H115</id>
        <label>NAPB</label>
    </interactant>
    <organismsDiffer>false</organismsDiffer>
    <experiments>3</experiments>
</comment>
<comment type="interaction">
    <interactant intactId="EBI-3904621">
        <id>P20292</id>
    </interactant>
    <interactant intactId="EBI-12807478">
        <id>P35372-10</id>
        <label>OPRM1</label>
    </interactant>
    <organismsDiffer>false</organismsDiffer>
    <experiments>3</experiments>
</comment>
<comment type="interaction">
    <interactant intactId="EBI-3904621">
        <id>P20292</id>
    </interactant>
    <interactant intactId="EBI-10171534">
        <id>A0PK00</id>
        <label>TMEM120B</label>
    </interactant>
    <organismsDiffer>false</organismsDiffer>
    <experiments>3</experiments>
</comment>
<comment type="interaction">
    <interactant intactId="EBI-3904621">
        <id>P20292</id>
    </interactant>
    <interactant intactId="EBI-2857623">
        <id>Q96FB2</id>
    </interactant>
    <organismsDiffer>false</organismsDiffer>
    <experiments>3</experiments>
</comment>
<comment type="subcellular location">
    <subcellularLocation>
        <location>Nucleus membrane</location>
        <topology>Multi-pass membrane protein</topology>
    </subcellularLocation>
    <subcellularLocation>
        <location>Endoplasmic reticulum membrane</location>
        <topology>Multi-pass membrane protein</topology>
    </subcellularLocation>
</comment>
<comment type="domain">
    <text evidence="3">The C-terminal part after residue 140 is mostly unstructured.</text>
</comment>
<comment type="disease">
    <disease id="DI-01835">
        <name>Ischemic stroke</name>
        <acronym>ISCHSTR</acronym>
        <description>A stroke is an acute neurologic event leading to death of neural tissue of the brain and resulting in loss of motor, sensory and/or cognitive function. Ischemic strokes, resulting from vascular occlusion, is considered to be a highly complex disease consisting of a group of heterogeneous disorders with multiple genetic and environmental risk factors.</description>
        <dbReference type="MIM" id="601367"/>
    </disease>
    <text>Disease susceptibility is associated with variants affecting the gene represented in this entry.</text>
</comment>
<comment type="disease">
    <text evidence="1 2">Genetic variations in ALOX5AP may be associated with susceptibility to myocardial infarction. Involvement in myocardial infarction is however unclear: according to some authors (PubMed:14770184), a 4-SNP haplotype in ALOX5AP confers risk of myocardial infarction, while according to other (PubMed:17304054) ALOX5AP is not implicated in this condition.</text>
</comment>
<comment type="similarity">
    <text evidence="7">Belongs to the MAPEG family.</text>
</comment>
<feature type="chain" id="PRO_0000217751" description="Arachidonate 5-lipoxygenase-activating protein">
    <location>
        <begin position="1"/>
        <end position="161"/>
    </location>
</feature>
<feature type="topological domain" description="Lumenal" evidence="3">
    <location>
        <begin position="1"/>
        <end position="8"/>
    </location>
</feature>
<feature type="transmembrane region" description="Helical">
    <location>
        <begin position="9"/>
        <end position="30"/>
    </location>
</feature>
<feature type="topological domain" description="Cytoplasmic" evidence="3">
    <location>
        <begin position="31"/>
        <end position="52"/>
    </location>
</feature>
<feature type="transmembrane region" description="Helical">
    <location>
        <begin position="53"/>
        <end position="77"/>
    </location>
</feature>
<feature type="topological domain" description="Lumenal" evidence="3">
    <location>
        <begin position="78"/>
        <end position="80"/>
    </location>
</feature>
<feature type="transmembrane region" description="Helical">
    <location>
        <begin position="81"/>
        <end position="102"/>
    </location>
</feature>
<feature type="topological domain" description="Cytoplasmic" evidence="3">
    <location>
        <begin position="103"/>
        <end position="107"/>
    </location>
</feature>
<feature type="intramembrane region">
    <location>
        <begin position="108"/>
        <end position="115"/>
    </location>
</feature>
<feature type="transmembrane region" description="Helical">
    <location>
        <begin position="116"/>
        <end position="128"/>
    </location>
</feature>
<feature type="topological domain" description="Lumenal" evidence="3">
    <location>
        <begin position="129"/>
        <end position="161"/>
    </location>
</feature>
<feature type="mutagenesis site" description="Increased affinity for the inhibitor MK-591." evidence="3">
    <original>V</original>
    <variation>A</variation>
    <location>
        <position position="20"/>
    </location>
</feature>
<feature type="mutagenesis site" description="Strongly decreased affinity for the inhibitor MK-591." evidence="3">
    <original>A</original>
    <variation>V</variation>
    <location>
        <position position="27"/>
    </location>
</feature>
<feature type="mutagenesis site" description="Strongly decreased affinity for the inhibitor MK-591." evidence="3">
    <original>V</original>
    <variation>A</variation>
    <location>
        <position position="30"/>
    </location>
</feature>
<feature type="mutagenesis site" description="Decreased affinity for the inhibitor MK-591." evidence="3">
    <original>D</original>
    <variation>A</variation>
    <location>
        <position position="62"/>
    </location>
</feature>
<feature type="mutagenesis site" description="Strongly decreased affinity for the inhibitor MK-591." evidence="3">
    <original>T</original>
    <variation>A</variation>
    <location>
        <position position="66"/>
    </location>
</feature>
<feature type="mutagenesis site" description="Strongly decreased affinity for the inhibitor MK-591." evidence="3">
    <original>Y</original>
    <variation>A</variation>
    <location>
        <position position="112"/>
    </location>
</feature>
<feature type="mutagenesis site" description="Increased affinity for the inhibitor MK-591." evidence="3">
    <original>I</original>
    <variation>A</variation>
    <location>
        <position position="113"/>
    </location>
</feature>
<feature type="mutagenesis site" description="Strongly increased affinity for the inhibitor MK-591." evidence="3">
    <original>K</original>
    <variation>A</variation>
    <location>
        <position position="116"/>
    </location>
</feature>
<feature type="mutagenesis site" description="Decreased affinity for the inhibitor MK-591." evidence="3">
    <original>F</original>
    <variation>A</variation>
    <location>
        <position position="123"/>
    </location>
</feature>
<feature type="sequence conflict" description="In Ref. 1; CAA36441." evidence="7" ref="1">
    <original>P</original>
    <variation>S</variation>
    <location>
        <position position="161"/>
    </location>
</feature>
<feature type="helix" evidence="8">
    <location>
        <begin position="3"/>
        <end position="7"/>
    </location>
</feature>
<feature type="helix" evidence="8">
    <location>
        <begin position="10"/>
        <end position="34"/>
    </location>
</feature>
<feature type="helix" evidence="8">
    <location>
        <begin position="48"/>
        <end position="77"/>
    </location>
</feature>
<feature type="helix" evidence="8">
    <location>
        <begin position="80"/>
        <end position="101"/>
    </location>
</feature>
<feature type="helix" evidence="8">
    <location>
        <begin position="116"/>
        <end position="153"/>
    </location>
</feature>
<feature type="helix" evidence="9">
    <location>
        <begin position="155"/>
        <end position="157"/>
    </location>
</feature>
<protein>
    <recommendedName>
        <fullName>Arachidonate 5-lipoxygenase-activating protein</fullName>
    </recommendedName>
    <alternativeName>
        <fullName>FLAP</fullName>
    </alternativeName>
    <alternativeName>
        <fullName>MK-886-binding protein</fullName>
    </alternativeName>
</protein>
<gene>
    <name type="primary">ALOX5AP</name>
    <name type="synonym">FLAP</name>
</gene>